<proteinExistence type="evidence at protein level"/>
<keyword id="KW-1267">Proteomics identification</keyword>
<keyword id="KW-1185">Reference proteome</keyword>
<protein>
    <recommendedName>
        <fullName evidence="4">Retrotransposon Gag-like protein 5</fullName>
    </recommendedName>
    <alternativeName>
        <fullName evidence="3">Retrotransposon gag domain-containing protein 4</fullName>
    </alternativeName>
</protein>
<feature type="chain" id="PRO_0000259629" description="Retrotransposon Gag-like protein 5">
    <location>
        <begin position="1"/>
        <end position="569"/>
    </location>
</feature>
<feature type="region of interest" description="Disordered" evidence="1">
    <location>
        <begin position="115"/>
        <end position="151"/>
    </location>
</feature>
<feature type="region of interest" description="Disordered" evidence="1">
    <location>
        <begin position="323"/>
        <end position="506"/>
    </location>
</feature>
<feature type="compositionally biased region" description="Pro residues" evidence="1">
    <location>
        <begin position="117"/>
        <end position="146"/>
    </location>
</feature>
<feature type="compositionally biased region" description="Acidic residues" evidence="1">
    <location>
        <begin position="334"/>
        <end position="350"/>
    </location>
</feature>
<feature type="compositionally biased region" description="Basic residues" evidence="1">
    <location>
        <begin position="353"/>
        <end position="367"/>
    </location>
</feature>
<feature type="compositionally biased region" description="Basic and acidic residues" evidence="1">
    <location>
        <begin position="372"/>
        <end position="392"/>
    </location>
</feature>
<feature type="compositionally biased region" description="Basic and acidic residues" evidence="1">
    <location>
        <begin position="401"/>
        <end position="415"/>
    </location>
</feature>
<feature type="compositionally biased region" description="Acidic residues" evidence="1">
    <location>
        <begin position="416"/>
        <end position="429"/>
    </location>
</feature>
<feature type="compositionally biased region" description="Acidic residues" evidence="1">
    <location>
        <begin position="443"/>
        <end position="469"/>
    </location>
</feature>
<feature type="compositionally biased region" description="Polar residues" evidence="1">
    <location>
        <begin position="476"/>
        <end position="485"/>
    </location>
</feature>
<feature type="sequence variant" id="VAR_051319" description="In dbSNP:rs6624595.">
    <original>S</original>
    <variation>R</variation>
    <location>
        <position position="420"/>
    </location>
</feature>
<name>RTL5_HUMAN</name>
<comment type="miscellaneous">
    <text evidence="2">RTL5 is one of at least 11 genes called Mar or Mart related to long terminal repeat retrotransposons. They do not correspond to functional retrotransposons, but rather to neofunctionalized retrotransposons genes.</text>
</comment>
<comment type="sequence caution" evidence="3">
    <conflict type="erroneous initiation">
        <sequence resource="EMBL-CDS" id="BAC02710"/>
    </conflict>
    <text>Extended N-terminus.</text>
</comment>
<dbReference type="EMBL" id="AB082532">
    <property type="protein sequence ID" value="BAC02710.1"/>
    <property type="status" value="ALT_INIT"/>
    <property type="molecule type" value="mRNA"/>
</dbReference>
<dbReference type="EMBL" id="BX119917">
    <property type="status" value="NOT_ANNOTATED_CDS"/>
    <property type="molecule type" value="Genomic_DNA"/>
</dbReference>
<dbReference type="EMBL" id="BC151224">
    <property type="protein sequence ID" value="AAI51225.1"/>
    <property type="molecule type" value="mRNA"/>
</dbReference>
<dbReference type="EMBL" id="AL359579">
    <property type="protein sequence ID" value="CAB94872.2"/>
    <property type="molecule type" value="mRNA"/>
</dbReference>
<dbReference type="CCDS" id="CCDS55446.1"/>
<dbReference type="PIR" id="T50613">
    <property type="entry name" value="T50613"/>
</dbReference>
<dbReference type="RefSeq" id="NP_001019626.1">
    <property type="nucleotide sequence ID" value="NM_001024455.4"/>
</dbReference>
<dbReference type="RefSeq" id="NP_001392080.1">
    <property type="nucleotide sequence ID" value="NM_001405151.1"/>
</dbReference>
<dbReference type="SMR" id="Q5HYW3"/>
<dbReference type="BioGRID" id="131065">
    <property type="interactions" value="2"/>
</dbReference>
<dbReference type="FunCoup" id="Q5HYW3">
    <property type="interactions" value="8"/>
</dbReference>
<dbReference type="STRING" id="9606.ENSP00000476792"/>
<dbReference type="GlyGen" id="Q5HYW3">
    <property type="glycosylation" value="1 site"/>
</dbReference>
<dbReference type="iPTMnet" id="Q5HYW3"/>
<dbReference type="PhosphoSitePlus" id="Q5HYW3"/>
<dbReference type="BioMuta" id="RTL5"/>
<dbReference type="DMDM" id="74741563"/>
<dbReference type="jPOST" id="Q5HYW3"/>
<dbReference type="MassIVE" id="Q5HYW3"/>
<dbReference type="PaxDb" id="9606-ENSP00000476792"/>
<dbReference type="PeptideAtlas" id="Q5HYW3"/>
<dbReference type="ProteomicsDB" id="62963"/>
<dbReference type="Antibodypedia" id="51779">
    <property type="antibodies" value="39 antibodies from 8 providers"/>
</dbReference>
<dbReference type="DNASU" id="340526"/>
<dbReference type="Ensembl" id="ENST00000479991.1">
    <property type="protein sequence ID" value="ENSP00000418667.1"/>
    <property type="gene ID" value="ENSG00000242732.6"/>
</dbReference>
<dbReference type="Ensembl" id="ENST00000609883.3">
    <property type="protein sequence ID" value="ENSP00000476792.1"/>
    <property type="gene ID" value="ENSG00000242732.6"/>
</dbReference>
<dbReference type="GeneID" id="340526"/>
<dbReference type="KEGG" id="hsa:340526"/>
<dbReference type="MANE-Select" id="ENST00000609883.3">
    <property type="protein sequence ID" value="ENSP00000476792.1"/>
    <property type="RefSeq nucleotide sequence ID" value="NM_001405151.1"/>
    <property type="RefSeq protein sequence ID" value="NP_001392080.1"/>
</dbReference>
<dbReference type="UCSC" id="uc004eaj.3">
    <property type="organism name" value="human"/>
</dbReference>
<dbReference type="AGR" id="HGNC:29430"/>
<dbReference type="CTD" id="340526"/>
<dbReference type="GeneCards" id="RTL5"/>
<dbReference type="HGNC" id="HGNC:29430">
    <property type="gene designation" value="RTL5"/>
</dbReference>
<dbReference type="HPA" id="ENSG00000242732">
    <property type="expression patterns" value="Tissue enhanced (brain)"/>
</dbReference>
<dbReference type="MIM" id="301135">
    <property type="type" value="gene"/>
</dbReference>
<dbReference type="neXtProt" id="NX_Q5HYW3"/>
<dbReference type="OpenTargets" id="ENSG00000242732"/>
<dbReference type="PharmGKB" id="PA134992098"/>
<dbReference type="VEuPathDB" id="HostDB:ENSG00000242732"/>
<dbReference type="eggNOG" id="ENOG502QPW5">
    <property type="taxonomic scope" value="Eukaryota"/>
</dbReference>
<dbReference type="GeneTree" id="ENSGT00940000163191"/>
<dbReference type="HOGENOM" id="CLU_039587_0_0_1"/>
<dbReference type="InParanoid" id="Q5HYW3"/>
<dbReference type="OMA" id="WPEIEPF"/>
<dbReference type="OrthoDB" id="9628410at2759"/>
<dbReference type="PAN-GO" id="Q5HYW3">
    <property type="GO annotations" value="0 GO annotations based on evolutionary models"/>
</dbReference>
<dbReference type="PhylomeDB" id="Q5HYW3"/>
<dbReference type="TreeFam" id="TF337113"/>
<dbReference type="PathwayCommons" id="Q5HYW3"/>
<dbReference type="BioGRID-ORCS" id="340526">
    <property type="hits" value="9 hits in 767 CRISPR screens"/>
</dbReference>
<dbReference type="GenomeRNAi" id="340526"/>
<dbReference type="Pharos" id="Q5HYW3">
    <property type="development level" value="Tdark"/>
</dbReference>
<dbReference type="PRO" id="PR:Q5HYW3"/>
<dbReference type="Proteomes" id="UP000005640">
    <property type="component" value="Chromosome X"/>
</dbReference>
<dbReference type="RNAct" id="Q5HYW3">
    <property type="molecule type" value="protein"/>
</dbReference>
<dbReference type="Bgee" id="ENSG00000242732">
    <property type="expression patterns" value="Expressed in right hemisphere of cerebellum and 156 other cell types or tissues"/>
</dbReference>
<dbReference type="InterPro" id="IPR032549">
    <property type="entry name" value="DUF4939"/>
</dbReference>
<dbReference type="InterPro" id="IPR032567">
    <property type="entry name" value="RTL1-rel"/>
</dbReference>
<dbReference type="PANTHER" id="PTHR15503">
    <property type="entry name" value="LDOC1 RELATED"/>
    <property type="match status" value="1"/>
</dbReference>
<dbReference type="PANTHER" id="PTHR15503:SF36">
    <property type="entry name" value="RETROTRANSPOSON GAG-LIKE PROTEIN 5"/>
    <property type="match status" value="1"/>
</dbReference>
<dbReference type="Pfam" id="PF16297">
    <property type="entry name" value="DUF4939"/>
    <property type="match status" value="1"/>
</dbReference>
<evidence type="ECO:0000256" key="1">
    <source>
        <dbReference type="SAM" id="MobiDB-lite"/>
    </source>
</evidence>
<evidence type="ECO:0000269" key="2">
    <source>
    </source>
</evidence>
<evidence type="ECO:0000305" key="3"/>
<evidence type="ECO:0000312" key="4">
    <source>
        <dbReference type="HGNC" id="HGNC:29430"/>
    </source>
</evidence>
<reference key="1">
    <citation type="journal article" date="2002" name="DNA Res.">
        <title>Characterization of size-fractionated cDNA libraries generated by the in vitro recombination-assisted method.</title>
        <authorList>
            <person name="Ohara O."/>
            <person name="Nagase T."/>
            <person name="Mitsui G."/>
            <person name="Kohga H."/>
            <person name="Kikuno R."/>
            <person name="Hiraoka S."/>
            <person name="Takahashi Y."/>
            <person name="Kitajima S."/>
            <person name="Saga Y."/>
            <person name="Koseki H."/>
        </authorList>
    </citation>
    <scope>NUCLEOTIDE SEQUENCE [LARGE SCALE MRNA]</scope>
    <source>
        <tissue>Brain</tissue>
    </source>
</reference>
<reference key="2">
    <citation type="journal article" date="2005" name="Nature">
        <title>The DNA sequence of the human X chromosome.</title>
        <authorList>
            <person name="Ross M.T."/>
            <person name="Grafham D.V."/>
            <person name="Coffey A.J."/>
            <person name="Scherer S."/>
            <person name="McLay K."/>
            <person name="Muzny D."/>
            <person name="Platzer M."/>
            <person name="Howell G.R."/>
            <person name="Burrows C."/>
            <person name="Bird C.P."/>
            <person name="Frankish A."/>
            <person name="Lovell F.L."/>
            <person name="Howe K.L."/>
            <person name="Ashurst J.L."/>
            <person name="Fulton R.S."/>
            <person name="Sudbrak R."/>
            <person name="Wen G."/>
            <person name="Jones M.C."/>
            <person name="Hurles M.E."/>
            <person name="Andrews T.D."/>
            <person name="Scott C.E."/>
            <person name="Searle S."/>
            <person name="Ramser J."/>
            <person name="Whittaker A."/>
            <person name="Deadman R."/>
            <person name="Carter N.P."/>
            <person name="Hunt S.E."/>
            <person name="Chen R."/>
            <person name="Cree A."/>
            <person name="Gunaratne P."/>
            <person name="Havlak P."/>
            <person name="Hodgson A."/>
            <person name="Metzker M.L."/>
            <person name="Richards S."/>
            <person name="Scott G."/>
            <person name="Steffen D."/>
            <person name="Sodergren E."/>
            <person name="Wheeler D.A."/>
            <person name="Worley K.C."/>
            <person name="Ainscough R."/>
            <person name="Ambrose K.D."/>
            <person name="Ansari-Lari M.A."/>
            <person name="Aradhya S."/>
            <person name="Ashwell R.I."/>
            <person name="Babbage A.K."/>
            <person name="Bagguley C.L."/>
            <person name="Ballabio A."/>
            <person name="Banerjee R."/>
            <person name="Barker G.E."/>
            <person name="Barlow K.F."/>
            <person name="Barrett I.P."/>
            <person name="Bates K.N."/>
            <person name="Beare D.M."/>
            <person name="Beasley H."/>
            <person name="Beasley O."/>
            <person name="Beck A."/>
            <person name="Bethel G."/>
            <person name="Blechschmidt K."/>
            <person name="Brady N."/>
            <person name="Bray-Allen S."/>
            <person name="Bridgeman A.M."/>
            <person name="Brown A.J."/>
            <person name="Brown M.J."/>
            <person name="Bonnin D."/>
            <person name="Bruford E.A."/>
            <person name="Buhay C."/>
            <person name="Burch P."/>
            <person name="Burford D."/>
            <person name="Burgess J."/>
            <person name="Burrill W."/>
            <person name="Burton J."/>
            <person name="Bye J.M."/>
            <person name="Carder C."/>
            <person name="Carrel L."/>
            <person name="Chako J."/>
            <person name="Chapman J.C."/>
            <person name="Chavez D."/>
            <person name="Chen E."/>
            <person name="Chen G."/>
            <person name="Chen Y."/>
            <person name="Chen Z."/>
            <person name="Chinault C."/>
            <person name="Ciccodicola A."/>
            <person name="Clark S.Y."/>
            <person name="Clarke G."/>
            <person name="Clee C.M."/>
            <person name="Clegg S."/>
            <person name="Clerc-Blankenburg K."/>
            <person name="Clifford K."/>
            <person name="Cobley V."/>
            <person name="Cole C.G."/>
            <person name="Conquer J.S."/>
            <person name="Corby N."/>
            <person name="Connor R.E."/>
            <person name="David R."/>
            <person name="Davies J."/>
            <person name="Davis C."/>
            <person name="Davis J."/>
            <person name="Delgado O."/>
            <person name="Deshazo D."/>
            <person name="Dhami P."/>
            <person name="Ding Y."/>
            <person name="Dinh H."/>
            <person name="Dodsworth S."/>
            <person name="Draper H."/>
            <person name="Dugan-Rocha S."/>
            <person name="Dunham A."/>
            <person name="Dunn M."/>
            <person name="Durbin K.J."/>
            <person name="Dutta I."/>
            <person name="Eades T."/>
            <person name="Ellwood M."/>
            <person name="Emery-Cohen A."/>
            <person name="Errington H."/>
            <person name="Evans K.L."/>
            <person name="Faulkner L."/>
            <person name="Francis F."/>
            <person name="Frankland J."/>
            <person name="Fraser A.E."/>
            <person name="Galgoczy P."/>
            <person name="Gilbert J."/>
            <person name="Gill R."/>
            <person name="Gloeckner G."/>
            <person name="Gregory S.G."/>
            <person name="Gribble S."/>
            <person name="Griffiths C."/>
            <person name="Grocock R."/>
            <person name="Gu Y."/>
            <person name="Gwilliam R."/>
            <person name="Hamilton C."/>
            <person name="Hart E.A."/>
            <person name="Hawes A."/>
            <person name="Heath P.D."/>
            <person name="Heitmann K."/>
            <person name="Hennig S."/>
            <person name="Hernandez J."/>
            <person name="Hinzmann B."/>
            <person name="Ho S."/>
            <person name="Hoffs M."/>
            <person name="Howden P.J."/>
            <person name="Huckle E.J."/>
            <person name="Hume J."/>
            <person name="Hunt P.J."/>
            <person name="Hunt A.R."/>
            <person name="Isherwood J."/>
            <person name="Jacob L."/>
            <person name="Johnson D."/>
            <person name="Jones S."/>
            <person name="de Jong P.J."/>
            <person name="Joseph S.S."/>
            <person name="Keenan S."/>
            <person name="Kelly S."/>
            <person name="Kershaw J.K."/>
            <person name="Khan Z."/>
            <person name="Kioschis P."/>
            <person name="Klages S."/>
            <person name="Knights A.J."/>
            <person name="Kosiura A."/>
            <person name="Kovar-Smith C."/>
            <person name="Laird G.K."/>
            <person name="Langford C."/>
            <person name="Lawlor S."/>
            <person name="Leversha M."/>
            <person name="Lewis L."/>
            <person name="Liu W."/>
            <person name="Lloyd C."/>
            <person name="Lloyd D.M."/>
            <person name="Loulseged H."/>
            <person name="Loveland J.E."/>
            <person name="Lovell J.D."/>
            <person name="Lozado R."/>
            <person name="Lu J."/>
            <person name="Lyne R."/>
            <person name="Ma J."/>
            <person name="Maheshwari M."/>
            <person name="Matthews L.H."/>
            <person name="McDowall J."/>
            <person name="McLaren S."/>
            <person name="McMurray A."/>
            <person name="Meidl P."/>
            <person name="Meitinger T."/>
            <person name="Milne S."/>
            <person name="Miner G."/>
            <person name="Mistry S.L."/>
            <person name="Morgan M."/>
            <person name="Morris S."/>
            <person name="Mueller I."/>
            <person name="Mullikin J.C."/>
            <person name="Nguyen N."/>
            <person name="Nordsiek G."/>
            <person name="Nyakatura G."/>
            <person name="O'dell C.N."/>
            <person name="Okwuonu G."/>
            <person name="Palmer S."/>
            <person name="Pandian R."/>
            <person name="Parker D."/>
            <person name="Parrish J."/>
            <person name="Pasternak S."/>
            <person name="Patel D."/>
            <person name="Pearce A.V."/>
            <person name="Pearson D.M."/>
            <person name="Pelan S.E."/>
            <person name="Perez L."/>
            <person name="Porter K.M."/>
            <person name="Ramsey Y."/>
            <person name="Reichwald K."/>
            <person name="Rhodes S."/>
            <person name="Ridler K.A."/>
            <person name="Schlessinger D."/>
            <person name="Schueler M.G."/>
            <person name="Sehra H.K."/>
            <person name="Shaw-Smith C."/>
            <person name="Shen H."/>
            <person name="Sheridan E.M."/>
            <person name="Shownkeen R."/>
            <person name="Skuce C.D."/>
            <person name="Smith M.L."/>
            <person name="Sotheran E.C."/>
            <person name="Steingruber H.E."/>
            <person name="Steward C.A."/>
            <person name="Storey R."/>
            <person name="Swann R.M."/>
            <person name="Swarbreck D."/>
            <person name="Tabor P.E."/>
            <person name="Taudien S."/>
            <person name="Taylor T."/>
            <person name="Teague B."/>
            <person name="Thomas K."/>
            <person name="Thorpe A."/>
            <person name="Timms K."/>
            <person name="Tracey A."/>
            <person name="Trevanion S."/>
            <person name="Tromans A.C."/>
            <person name="d'Urso M."/>
            <person name="Verduzco D."/>
            <person name="Villasana D."/>
            <person name="Waldron L."/>
            <person name="Wall M."/>
            <person name="Wang Q."/>
            <person name="Warren J."/>
            <person name="Warry G.L."/>
            <person name="Wei X."/>
            <person name="West A."/>
            <person name="Whitehead S.L."/>
            <person name="Whiteley M.N."/>
            <person name="Wilkinson J.E."/>
            <person name="Willey D.L."/>
            <person name="Williams G."/>
            <person name="Williams L."/>
            <person name="Williamson A."/>
            <person name="Williamson H."/>
            <person name="Wilming L."/>
            <person name="Woodmansey R.L."/>
            <person name="Wray P.W."/>
            <person name="Yen J."/>
            <person name="Zhang J."/>
            <person name="Zhou J."/>
            <person name="Zoghbi H."/>
            <person name="Zorilla S."/>
            <person name="Buck D."/>
            <person name="Reinhardt R."/>
            <person name="Poustka A."/>
            <person name="Rosenthal A."/>
            <person name="Lehrach H."/>
            <person name="Meindl A."/>
            <person name="Minx P.J."/>
            <person name="Hillier L.W."/>
            <person name="Willard H.F."/>
            <person name="Wilson R.K."/>
            <person name="Waterston R.H."/>
            <person name="Rice C.M."/>
            <person name="Vaudin M."/>
            <person name="Coulson A."/>
            <person name="Nelson D.L."/>
            <person name="Weinstock G."/>
            <person name="Sulston J.E."/>
            <person name="Durbin R.M."/>
            <person name="Hubbard T."/>
            <person name="Gibbs R.A."/>
            <person name="Beck S."/>
            <person name="Rogers J."/>
            <person name="Bentley D.R."/>
        </authorList>
    </citation>
    <scope>NUCLEOTIDE SEQUENCE [LARGE SCALE GENOMIC DNA]</scope>
</reference>
<reference key="3">
    <citation type="journal article" date="2004" name="Genome Res.">
        <title>The status, quality, and expansion of the NIH full-length cDNA project: the Mammalian Gene Collection (MGC).</title>
        <authorList>
            <consortium name="The MGC Project Team"/>
        </authorList>
    </citation>
    <scope>NUCLEOTIDE SEQUENCE [LARGE SCALE MRNA]</scope>
</reference>
<reference key="4">
    <citation type="journal article" date="2007" name="BMC Genomics">
        <title>The full-ORF clone resource of the German cDNA consortium.</title>
        <authorList>
            <person name="Bechtel S."/>
            <person name="Rosenfelder H."/>
            <person name="Duda A."/>
            <person name="Schmidt C.P."/>
            <person name="Ernst U."/>
            <person name="Wellenreuther R."/>
            <person name="Mehrle A."/>
            <person name="Schuster C."/>
            <person name="Bahr A."/>
            <person name="Bloecker H."/>
            <person name="Heubner D."/>
            <person name="Hoerlein A."/>
            <person name="Michel G."/>
            <person name="Wedler H."/>
            <person name="Koehrer K."/>
            <person name="Ottenwaelder B."/>
            <person name="Poustka A."/>
            <person name="Wiemann S."/>
            <person name="Schupp I."/>
        </authorList>
    </citation>
    <scope>NUCLEOTIDE SEQUENCE [LARGE SCALE MRNA] OF 200-569</scope>
    <source>
        <tissue>Amygdala</tissue>
    </source>
</reference>
<reference key="5">
    <citation type="journal article" date="2005" name="Cytogenet. Genome Res.">
        <title>A family of neofunctionalized Ty3/gypsy retrotransposon genes in mammalian genomes.</title>
        <authorList>
            <person name="Brandt J."/>
            <person name="Veith A.-M."/>
            <person name="Volff J.-N."/>
        </authorList>
    </citation>
    <scope>GENE FAMILY</scope>
</reference>
<gene>
    <name evidence="4" type="primary">RTL5</name>
    <name type="synonym">KIAA2001</name>
    <name evidence="3" type="synonym">RGAG4</name>
</gene>
<accession>Q5HYW3</accession>
<accession>A7E2W7</accession>
<accession>Q8NCM4</accession>
<accession>Q9NPX1</accession>
<organism>
    <name type="scientific">Homo sapiens</name>
    <name type="common">Human</name>
    <dbReference type="NCBI Taxonomy" id="9606"/>
    <lineage>
        <taxon>Eukaryota</taxon>
        <taxon>Metazoa</taxon>
        <taxon>Chordata</taxon>
        <taxon>Craniata</taxon>
        <taxon>Vertebrata</taxon>
        <taxon>Euteleostomi</taxon>
        <taxon>Mammalia</taxon>
        <taxon>Eutheria</taxon>
        <taxon>Euarchontoglires</taxon>
        <taxon>Primates</taxon>
        <taxon>Haplorrhini</taxon>
        <taxon>Catarrhini</taxon>
        <taxon>Hominidae</taxon>
        <taxon>Homo</taxon>
    </lineage>
</organism>
<sequence>MSEASGNLNSLRMANVALREELNALRGENANLGLQLGRALAEVNSLRGNVSSYIRWPVPIVPVLAEENLEFALSEIEVIPGGELPFLCRPPPRAEPDCISDDLLINVIQDRSTPDGPADPPLLPIPPPPALPPPASKEPPPQPPLAPLERPEIEPFSGDPVYLAEFLMQLETFIADHEVHFPGGAERVAFLISFFTGEAKDWAISVTQEGSPLHANFPRFLDEIRKEFCGPIPPRVAKKAIRKLKQGHCTLGSYADAFQFLAQFLSWDDCRLQNQFLKGLSEFFRKELLWSTEMADLDELILECVEIERKVRVPKPIPLPGVRNIIFPFAPSPNEEESEDEEYYSEDEDQEARRHRLHSKDQRKRMRAFQQEMKEKEEEEMKKEEEMKKKEEKEEEEEEEMKQKEEEEEIRNKNEEEGESKDEEDEDEDGGQKPEGEPQQDPGTEETYGEVEEEPLDEAQDDDLDELMEMEPTFVHASSQTSGPTSGYHAENFLGASPPIIQPSRRRNQNRVPLLEGLPGTNSPFYSSPQLIRRTGRLGQRQVRRRPPVLFRLTPRQGGHRAARGRIRV</sequence>